<keyword id="KW-0963">Cytoplasm</keyword>
<keyword id="KW-0251">Elongation factor</keyword>
<keyword id="KW-0648">Protein biosynthesis</keyword>
<keyword id="KW-1185">Reference proteome</keyword>
<gene>
    <name type="primary">tsf</name>
    <name type="ordered locus">BU232</name>
</gene>
<dbReference type="EMBL" id="BA000003">
    <property type="protein sequence ID" value="BAB12947.1"/>
    <property type="molecule type" value="Genomic_DNA"/>
</dbReference>
<dbReference type="RefSeq" id="NP_240061.1">
    <property type="nucleotide sequence ID" value="NC_002528.1"/>
</dbReference>
<dbReference type="RefSeq" id="WP_009874188.1">
    <property type="nucleotide sequence ID" value="NZ_AP036055.1"/>
</dbReference>
<dbReference type="SMR" id="P57326"/>
<dbReference type="STRING" id="563178.BUAP5A_227"/>
<dbReference type="EnsemblBacteria" id="BAB12947">
    <property type="protein sequence ID" value="BAB12947"/>
    <property type="gene ID" value="BAB12947"/>
</dbReference>
<dbReference type="KEGG" id="buc:BU232"/>
<dbReference type="PATRIC" id="fig|107806.10.peg.245"/>
<dbReference type="eggNOG" id="COG0264">
    <property type="taxonomic scope" value="Bacteria"/>
</dbReference>
<dbReference type="HOGENOM" id="CLU_047155_0_2_6"/>
<dbReference type="Proteomes" id="UP000001806">
    <property type="component" value="Chromosome"/>
</dbReference>
<dbReference type="GO" id="GO:0005737">
    <property type="term" value="C:cytoplasm"/>
    <property type="evidence" value="ECO:0007669"/>
    <property type="project" value="UniProtKB-SubCell"/>
</dbReference>
<dbReference type="GO" id="GO:0003746">
    <property type="term" value="F:translation elongation factor activity"/>
    <property type="evidence" value="ECO:0007669"/>
    <property type="project" value="UniProtKB-UniRule"/>
</dbReference>
<dbReference type="CDD" id="cd14275">
    <property type="entry name" value="UBA_EF-Ts"/>
    <property type="match status" value="1"/>
</dbReference>
<dbReference type="FunFam" id="1.10.8.10:FF:000001">
    <property type="entry name" value="Elongation factor Ts"/>
    <property type="match status" value="1"/>
</dbReference>
<dbReference type="Gene3D" id="1.10.286.20">
    <property type="match status" value="1"/>
</dbReference>
<dbReference type="Gene3D" id="1.10.8.10">
    <property type="entry name" value="DNA helicase RuvA subunit, C-terminal domain"/>
    <property type="match status" value="1"/>
</dbReference>
<dbReference type="Gene3D" id="3.30.479.20">
    <property type="entry name" value="Elongation factor Ts, dimerisation domain"/>
    <property type="match status" value="2"/>
</dbReference>
<dbReference type="HAMAP" id="MF_00050">
    <property type="entry name" value="EF_Ts"/>
    <property type="match status" value="1"/>
</dbReference>
<dbReference type="InterPro" id="IPR036402">
    <property type="entry name" value="EF-Ts_dimer_sf"/>
</dbReference>
<dbReference type="InterPro" id="IPR001816">
    <property type="entry name" value="Transl_elong_EFTs/EF1B"/>
</dbReference>
<dbReference type="InterPro" id="IPR014039">
    <property type="entry name" value="Transl_elong_EFTs/EF1B_dimer"/>
</dbReference>
<dbReference type="InterPro" id="IPR018101">
    <property type="entry name" value="Transl_elong_Ts_CS"/>
</dbReference>
<dbReference type="InterPro" id="IPR009060">
    <property type="entry name" value="UBA-like_sf"/>
</dbReference>
<dbReference type="NCBIfam" id="TIGR00116">
    <property type="entry name" value="tsf"/>
    <property type="match status" value="1"/>
</dbReference>
<dbReference type="PANTHER" id="PTHR11741">
    <property type="entry name" value="ELONGATION FACTOR TS"/>
    <property type="match status" value="1"/>
</dbReference>
<dbReference type="PANTHER" id="PTHR11741:SF0">
    <property type="entry name" value="ELONGATION FACTOR TS, MITOCHONDRIAL"/>
    <property type="match status" value="1"/>
</dbReference>
<dbReference type="Pfam" id="PF00889">
    <property type="entry name" value="EF_TS"/>
    <property type="match status" value="1"/>
</dbReference>
<dbReference type="SUPFAM" id="SSF54713">
    <property type="entry name" value="Elongation factor Ts (EF-Ts), dimerisation domain"/>
    <property type="match status" value="1"/>
</dbReference>
<dbReference type="SUPFAM" id="SSF46934">
    <property type="entry name" value="UBA-like"/>
    <property type="match status" value="1"/>
</dbReference>
<dbReference type="PROSITE" id="PS01126">
    <property type="entry name" value="EF_TS_1"/>
    <property type="match status" value="1"/>
</dbReference>
<dbReference type="PROSITE" id="PS01127">
    <property type="entry name" value="EF_TS_2"/>
    <property type="match status" value="1"/>
</dbReference>
<accession>P57326</accession>
<name>EFTS_BUCAI</name>
<sequence>MKTNVDTGLIKELRSRTGAGFLACKRALLEENGDIESAIDNLRKSGKLTAEKKINNITNQGAIFSKIKNNIGVMLELNCETDFVSKDNLFICLGEDILVEALEKRIKDINQLKVIFESRRTELVSKVGENINIRRFHLIEGENIFSYLHGVRIGVLVSSSSLNKTILKNIAMHIAASKPEYLHPKNVSSEVFQREYQIQLELAKNLNKPSNLLKKIIDGRMEKFVNNISLTSQSFIMNPIKTVGDILNENHAHIESFIRFELGELVSK</sequence>
<reference key="1">
    <citation type="journal article" date="2000" name="Nature">
        <title>Genome sequence of the endocellular bacterial symbiont of aphids Buchnera sp. APS.</title>
        <authorList>
            <person name="Shigenobu S."/>
            <person name="Watanabe H."/>
            <person name="Hattori M."/>
            <person name="Sakaki Y."/>
            <person name="Ishikawa H."/>
        </authorList>
    </citation>
    <scope>NUCLEOTIDE SEQUENCE [LARGE SCALE GENOMIC DNA]</scope>
    <source>
        <strain>APS</strain>
    </source>
</reference>
<evidence type="ECO:0000250" key="1"/>
<evidence type="ECO:0000305" key="2"/>
<proteinExistence type="inferred from homology"/>
<feature type="chain" id="PRO_0000161092" description="Elongation factor Ts">
    <location>
        <begin position="1"/>
        <end position="268"/>
    </location>
</feature>
<feature type="region of interest" description="Involved in Mg(2+) ion dislocation from EF-Tu" evidence="1">
    <location>
        <begin position="81"/>
        <end position="84"/>
    </location>
</feature>
<protein>
    <recommendedName>
        <fullName>Elongation factor Ts</fullName>
        <shortName>EF-Ts</shortName>
    </recommendedName>
</protein>
<organism>
    <name type="scientific">Buchnera aphidicola subsp. Acyrthosiphon pisum (strain APS)</name>
    <name type="common">Acyrthosiphon pisum symbiotic bacterium</name>
    <dbReference type="NCBI Taxonomy" id="107806"/>
    <lineage>
        <taxon>Bacteria</taxon>
        <taxon>Pseudomonadati</taxon>
        <taxon>Pseudomonadota</taxon>
        <taxon>Gammaproteobacteria</taxon>
        <taxon>Enterobacterales</taxon>
        <taxon>Erwiniaceae</taxon>
        <taxon>Buchnera</taxon>
    </lineage>
</organism>
<comment type="function">
    <text evidence="1">Associates with the EF-Tu.GDP complex and induces the exchange of GDP to GTP. It remains bound to the aminoacyl-tRNA.EF-Tu.GTP complex up to the GTP hydrolysis stage on the ribosome (By similarity).</text>
</comment>
<comment type="subcellular location">
    <subcellularLocation>
        <location evidence="1">Cytoplasm</location>
    </subcellularLocation>
</comment>
<comment type="similarity">
    <text evidence="2">Belongs to the EF-Ts family.</text>
</comment>